<organism>
    <name type="scientific">Salmonella paratyphi B (strain ATCC BAA-1250 / SPB7)</name>
    <dbReference type="NCBI Taxonomy" id="1016998"/>
    <lineage>
        <taxon>Bacteria</taxon>
        <taxon>Pseudomonadati</taxon>
        <taxon>Pseudomonadota</taxon>
        <taxon>Gammaproteobacteria</taxon>
        <taxon>Enterobacterales</taxon>
        <taxon>Enterobacteriaceae</taxon>
        <taxon>Salmonella</taxon>
    </lineage>
</organism>
<proteinExistence type="inferred from homology"/>
<dbReference type="EMBL" id="CP000886">
    <property type="protein sequence ID" value="ABX65615.1"/>
    <property type="molecule type" value="Genomic_DNA"/>
</dbReference>
<dbReference type="RefSeq" id="WP_001286419.1">
    <property type="nucleotide sequence ID" value="NC_010102.1"/>
</dbReference>
<dbReference type="SMR" id="A9MZN0"/>
<dbReference type="KEGG" id="spq:SPAB_00173"/>
<dbReference type="PATRIC" id="fig|1016998.12.peg.165"/>
<dbReference type="HOGENOM" id="CLU_178280_3_1_6"/>
<dbReference type="BioCyc" id="SENT1016998:SPAB_RS00695-MONOMER"/>
<dbReference type="Proteomes" id="UP000008556">
    <property type="component" value="Chromosome"/>
</dbReference>
<dbReference type="GO" id="GO:0008657">
    <property type="term" value="F:DNA topoisomerase type II (double strand cut, ATP-hydrolyzing) inhibitor activity"/>
    <property type="evidence" value="ECO:0007669"/>
    <property type="project" value="UniProtKB-UniRule"/>
</dbReference>
<dbReference type="GO" id="GO:0008270">
    <property type="term" value="F:zinc ion binding"/>
    <property type="evidence" value="ECO:0007669"/>
    <property type="project" value="UniProtKB-UniRule"/>
</dbReference>
<dbReference type="GO" id="GO:0006355">
    <property type="term" value="P:regulation of DNA-templated transcription"/>
    <property type="evidence" value="ECO:0007669"/>
    <property type="project" value="InterPro"/>
</dbReference>
<dbReference type="Gene3D" id="3.30.50.10">
    <property type="entry name" value="Erythroid Transcription Factor GATA-1, subunit A"/>
    <property type="match status" value="1"/>
</dbReference>
<dbReference type="HAMAP" id="MF_00649">
    <property type="entry name" value="DNA_gyrase_inhibitor_YacG"/>
    <property type="match status" value="1"/>
</dbReference>
<dbReference type="InterPro" id="IPR005584">
    <property type="entry name" value="DNA_gyrase_inhibitor_YacG"/>
</dbReference>
<dbReference type="InterPro" id="IPR013088">
    <property type="entry name" value="Znf_NHR/GATA"/>
</dbReference>
<dbReference type="NCBIfam" id="NF001638">
    <property type="entry name" value="PRK00418.1"/>
    <property type="match status" value="1"/>
</dbReference>
<dbReference type="PANTHER" id="PTHR36150">
    <property type="entry name" value="DNA GYRASE INHIBITOR YACG"/>
    <property type="match status" value="1"/>
</dbReference>
<dbReference type="PANTHER" id="PTHR36150:SF1">
    <property type="entry name" value="DNA GYRASE INHIBITOR YACG"/>
    <property type="match status" value="1"/>
</dbReference>
<dbReference type="Pfam" id="PF03884">
    <property type="entry name" value="YacG"/>
    <property type="match status" value="1"/>
</dbReference>
<dbReference type="SUPFAM" id="SSF57716">
    <property type="entry name" value="Glucocorticoid receptor-like (DNA-binding domain)"/>
    <property type="match status" value="1"/>
</dbReference>
<sequence>MSDVTVVNCPTCGKPVVWGEISPFRPFCSKRCQLIDLGEWAAEEKRIASSGDQSDSDDWSEER</sequence>
<protein>
    <recommendedName>
        <fullName evidence="1">DNA gyrase inhibitor YacG</fullName>
    </recommendedName>
</protein>
<evidence type="ECO:0000255" key="1">
    <source>
        <dbReference type="HAMAP-Rule" id="MF_00649"/>
    </source>
</evidence>
<comment type="function">
    <text evidence="1">Inhibits all the catalytic activities of DNA gyrase by preventing its interaction with DNA. Acts by binding directly to the C-terminal domain of GyrB, which probably disrupts DNA binding by the gyrase.</text>
</comment>
<comment type="cofactor">
    <cofactor evidence="1">
        <name>Zn(2+)</name>
        <dbReference type="ChEBI" id="CHEBI:29105"/>
    </cofactor>
    <text evidence="1">Binds 1 zinc ion.</text>
</comment>
<comment type="subunit">
    <text evidence="1">Interacts with GyrB.</text>
</comment>
<comment type="similarity">
    <text evidence="1">Belongs to the DNA gyrase inhibitor YacG family.</text>
</comment>
<feature type="chain" id="PRO_1000082726" description="DNA gyrase inhibitor YacG">
    <location>
        <begin position="1"/>
        <end position="63"/>
    </location>
</feature>
<feature type="binding site" evidence="1">
    <location>
        <position position="9"/>
    </location>
    <ligand>
        <name>Zn(2+)</name>
        <dbReference type="ChEBI" id="CHEBI:29105"/>
    </ligand>
</feature>
<feature type="binding site" evidence="1">
    <location>
        <position position="12"/>
    </location>
    <ligand>
        <name>Zn(2+)</name>
        <dbReference type="ChEBI" id="CHEBI:29105"/>
    </ligand>
</feature>
<feature type="binding site" evidence="1">
    <location>
        <position position="28"/>
    </location>
    <ligand>
        <name>Zn(2+)</name>
        <dbReference type="ChEBI" id="CHEBI:29105"/>
    </ligand>
</feature>
<feature type="binding site" evidence="1">
    <location>
        <position position="32"/>
    </location>
    <ligand>
        <name>Zn(2+)</name>
        <dbReference type="ChEBI" id="CHEBI:29105"/>
    </ligand>
</feature>
<accession>A9MZN0</accession>
<name>YACG_SALPB</name>
<keyword id="KW-0479">Metal-binding</keyword>
<keyword id="KW-0862">Zinc</keyword>
<reference key="1">
    <citation type="submission" date="2007-11" db="EMBL/GenBank/DDBJ databases">
        <authorList>
            <consortium name="The Salmonella enterica serovar Paratyphi B Genome Sequencing Project"/>
            <person name="McClelland M."/>
            <person name="Sanderson E.K."/>
            <person name="Porwollik S."/>
            <person name="Spieth J."/>
            <person name="Clifton W.S."/>
            <person name="Fulton R."/>
            <person name="Cordes M."/>
            <person name="Wollam A."/>
            <person name="Shah N."/>
            <person name="Pepin K."/>
            <person name="Bhonagiri V."/>
            <person name="Nash W."/>
            <person name="Johnson M."/>
            <person name="Thiruvilangam P."/>
            <person name="Wilson R."/>
        </authorList>
    </citation>
    <scope>NUCLEOTIDE SEQUENCE [LARGE SCALE GENOMIC DNA]</scope>
    <source>
        <strain>ATCC BAA-1250 / SPB7</strain>
    </source>
</reference>
<gene>
    <name evidence="1" type="primary">yacG</name>
    <name type="ordered locus">SPAB_00173</name>
</gene>